<gene>
    <name evidence="1" type="primary">recR</name>
    <name type="ordered locus">Rmet_2127</name>
</gene>
<evidence type="ECO:0000255" key="1">
    <source>
        <dbReference type="HAMAP-Rule" id="MF_00017"/>
    </source>
</evidence>
<dbReference type="EMBL" id="CP000352">
    <property type="protein sequence ID" value="ABF09006.1"/>
    <property type="molecule type" value="Genomic_DNA"/>
</dbReference>
<dbReference type="RefSeq" id="WP_008647479.1">
    <property type="nucleotide sequence ID" value="NC_007973.1"/>
</dbReference>
<dbReference type="SMR" id="Q1LLH0"/>
<dbReference type="STRING" id="266264.Rmet_2127"/>
<dbReference type="GeneID" id="60821292"/>
<dbReference type="KEGG" id="rme:Rmet_2127"/>
<dbReference type="eggNOG" id="COG0353">
    <property type="taxonomic scope" value="Bacteria"/>
</dbReference>
<dbReference type="HOGENOM" id="CLU_060739_1_2_4"/>
<dbReference type="Proteomes" id="UP000002429">
    <property type="component" value="Chromosome"/>
</dbReference>
<dbReference type="GO" id="GO:0003677">
    <property type="term" value="F:DNA binding"/>
    <property type="evidence" value="ECO:0007669"/>
    <property type="project" value="UniProtKB-UniRule"/>
</dbReference>
<dbReference type="GO" id="GO:0008270">
    <property type="term" value="F:zinc ion binding"/>
    <property type="evidence" value="ECO:0007669"/>
    <property type="project" value="UniProtKB-KW"/>
</dbReference>
<dbReference type="GO" id="GO:0006310">
    <property type="term" value="P:DNA recombination"/>
    <property type="evidence" value="ECO:0007669"/>
    <property type="project" value="UniProtKB-UniRule"/>
</dbReference>
<dbReference type="GO" id="GO:0006281">
    <property type="term" value="P:DNA repair"/>
    <property type="evidence" value="ECO:0007669"/>
    <property type="project" value="UniProtKB-UniRule"/>
</dbReference>
<dbReference type="CDD" id="cd01025">
    <property type="entry name" value="TOPRIM_recR"/>
    <property type="match status" value="1"/>
</dbReference>
<dbReference type="Gene3D" id="3.40.1360.10">
    <property type="match status" value="1"/>
</dbReference>
<dbReference type="Gene3D" id="6.10.250.240">
    <property type="match status" value="1"/>
</dbReference>
<dbReference type="Gene3D" id="1.10.8.420">
    <property type="entry name" value="RecR Domain 1"/>
    <property type="match status" value="1"/>
</dbReference>
<dbReference type="HAMAP" id="MF_00017">
    <property type="entry name" value="RecR"/>
    <property type="match status" value="1"/>
</dbReference>
<dbReference type="InterPro" id="IPR000093">
    <property type="entry name" value="DNA_Rcmb_RecR"/>
</dbReference>
<dbReference type="InterPro" id="IPR023627">
    <property type="entry name" value="Rcmb_RecR"/>
</dbReference>
<dbReference type="InterPro" id="IPR015967">
    <property type="entry name" value="Rcmb_RecR_Znf"/>
</dbReference>
<dbReference type="InterPro" id="IPR006171">
    <property type="entry name" value="TOPRIM_dom"/>
</dbReference>
<dbReference type="InterPro" id="IPR034137">
    <property type="entry name" value="TOPRIM_RecR"/>
</dbReference>
<dbReference type="NCBIfam" id="TIGR00615">
    <property type="entry name" value="recR"/>
    <property type="match status" value="1"/>
</dbReference>
<dbReference type="PANTHER" id="PTHR30446">
    <property type="entry name" value="RECOMBINATION PROTEIN RECR"/>
    <property type="match status" value="1"/>
</dbReference>
<dbReference type="PANTHER" id="PTHR30446:SF0">
    <property type="entry name" value="RECOMBINATION PROTEIN RECR"/>
    <property type="match status" value="1"/>
</dbReference>
<dbReference type="Pfam" id="PF21175">
    <property type="entry name" value="RecR_C"/>
    <property type="match status" value="1"/>
</dbReference>
<dbReference type="Pfam" id="PF21176">
    <property type="entry name" value="RecR_HhH"/>
    <property type="match status" value="1"/>
</dbReference>
<dbReference type="Pfam" id="PF02132">
    <property type="entry name" value="RecR_ZnF"/>
    <property type="match status" value="1"/>
</dbReference>
<dbReference type="Pfam" id="PF13662">
    <property type="entry name" value="Toprim_4"/>
    <property type="match status" value="1"/>
</dbReference>
<dbReference type="SMART" id="SM00493">
    <property type="entry name" value="TOPRIM"/>
    <property type="match status" value="1"/>
</dbReference>
<dbReference type="SUPFAM" id="SSF111304">
    <property type="entry name" value="Recombination protein RecR"/>
    <property type="match status" value="1"/>
</dbReference>
<dbReference type="PROSITE" id="PS50880">
    <property type="entry name" value="TOPRIM"/>
    <property type="match status" value="1"/>
</dbReference>
<protein>
    <recommendedName>
        <fullName evidence="1">Recombination protein RecR</fullName>
    </recommendedName>
</protein>
<sequence>MRAAPPTSLQALIEALKVLPGVGPKSAQRMAYHLLQHDREGARKLGDALRGAVDGIRHCTRCNTFTELEICGTCSDPERDATLLCVVETPADQVMIEQTLTYRGQYFVLMGRLSPLDGIGPKEIHLDRLLARATDPELGGPASEVIVATNFTSEGEATAHYIGEMLKARGLKVSRLARGVPVGGELEYVDAGTIARAVMDRRTL</sequence>
<keyword id="KW-0227">DNA damage</keyword>
<keyword id="KW-0233">DNA recombination</keyword>
<keyword id="KW-0234">DNA repair</keyword>
<keyword id="KW-0479">Metal-binding</keyword>
<keyword id="KW-1185">Reference proteome</keyword>
<keyword id="KW-0862">Zinc</keyword>
<keyword id="KW-0863">Zinc-finger</keyword>
<name>RECR_CUPMC</name>
<proteinExistence type="inferred from homology"/>
<feature type="chain" id="PRO_0000322939" description="Recombination protein RecR">
    <location>
        <begin position="1"/>
        <end position="204"/>
    </location>
</feature>
<feature type="domain" description="Toprim" evidence="1">
    <location>
        <begin position="82"/>
        <end position="181"/>
    </location>
</feature>
<feature type="zinc finger region" description="C4-type" evidence="1">
    <location>
        <begin position="59"/>
        <end position="74"/>
    </location>
</feature>
<comment type="function">
    <text evidence="1">May play a role in DNA repair. It seems to be involved in an RecBC-independent recombinational process of DNA repair. It may act with RecF and RecO.</text>
</comment>
<comment type="similarity">
    <text evidence="1">Belongs to the RecR family.</text>
</comment>
<accession>Q1LLH0</accession>
<reference key="1">
    <citation type="journal article" date="2010" name="PLoS ONE">
        <title>The complete genome sequence of Cupriavidus metallidurans strain CH34, a master survivalist in harsh and anthropogenic environments.</title>
        <authorList>
            <person name="Janssen P.J."/>
            <person name="Van Houdt R."/>
            <person name="Moors H."/>
            <person name="Monsieurs P."/>
            <person name="Morin N."/>
            <person name="Michaux A."/>
            <person name="Benotmane M.A."/>
            <person name="Leys N."/>
            <person name="Vallaeys T."/>
            <person name="Lapidus A."/>
            <person name="Monchy S."/>
            <person name="Medigue C."/>
            <person name="Taghavi S."/>
            <person name="McCorkle S."/>
            <person name="Dunn J."/>
            <person name="van der Lelie D."/>
            <person name="Mergeay M."/>
        </authorList>
    </citation>
    <scope>NUCLEOTIDE SEQUENCE [LARGE SCALE GENOMIC DNA]</scope>
    <source>
        <strain>ATCC 43123 / DSM 2839 / NBRC 102507 / CH34</strain>
    </source>
</reference>
<organism>
    <name type="scientific">Cupriavidus metallidurans (strain ATCC 43123 / DSM 2839 / NBRC 102507 / CH34)</name>
    <name type="common">Ralstonia metallidurans</name>
    <dbReference type="NCBI Taxonomy" id="266264"/>
    <lineage>
        <taxon>Bacteria</taxon>
        <taxon>Pseudomonadati</taxon>
        <taxon>Pseudomonadota</taxon>
        <taxon>Betaproteobacteria</taxon>
        <taxon>Burkholderiales</taxon>
        <taxon>Burkholderiaceae</taxon>
        <taxon>Cupriavidus</taxon>
    </lineage>
</organism>